<comment type="function">
    <text evidence="1 4">Probably involved in bile acid degradation (Probable). In vitro, when associated with the ChsH1/ChsH2 hydratase, catalyzes the retroaldol cleavage of 17-hydroxy-3-oxo-4-pregnene-20-carboxyl-CoA (17-HOPC-CoA), forming androst-4-ene-3,17-dione and propionyl-CoA (PubMed:31209106). The in vivo substrate is probably a closely analogous bile acid degradation metabolite (Probable).</text>
</comment>
<comment type="catalytic activity">
    <reaction evidence="1">
        <text>17-hydroxy-3-oxochol-4-en-22-oyl-CoA = androst-4-ene-3,17-dione + propanoyl-CoA</text>
        <dbReference type="Rhea" id="RHEA:46648"/>
        <dbReference type="ChEBI" id="CHEBI:16422"/>
        <dbReference type="ChEBI" id="CHEBI:57392"/>
        <dbReference type="ChEBI" id="CHEBI:86028"/>
    </reaction>
</comment>
<comment type="biophysicochemical properties">
    <kinetics>
        <KM evidence="1">2.4 uM for 17-HOPC-CoA (in the presence of ChsH2-DUF35)</KM>
        <text evidence="1">kcat is 7.1 sec(-1).</text>
    </kinetics>
</comment>
<comment type="subunit">
    <text evidence="1">Homodimer (PubMed:31209106). Interacts with the ChsH1/ChsH2 hydratase via the DUF35 C-terminal region of ChsH2 (ChsH2-DUF35) (PubMed:31209106).</text>
</comment>
<comment type="similarity">
    <text evidence="3">Belongs to the thiolase-like superfamily.</text>
</comment>
<name>LTP2_THECD</name>
<dbReference type="EC" id="4.1.3.-" evidence="1"/>
<dbReference type="EMBL" id="CP001738">
    <property type="protein sequence ID" value="ACY99017.1"/>
    <property type="molecule type" value="Genomic_DNA"/>
</dbReference>
<dbReference type="RefSeq" id="WP_012853801.1">
    <property type="nucleotide sequence ID" value="NC_013510.1"/>
</dbReference>
<dbReference type="PDB" id="6OK1">
    <property type="method" value="X-ray"/>
    <property type="resolution" value="1.70 A"/>
    <property type="chains" value="A/C=1-391"/>
</dbReference>
<dbReference type="PDBsum" id="6OK1"/>
<dbReference type="SMR" id="D1AB74"/>
<dbReference type="STRING" id="471852.Tcur_3479"/>
<dbReference type="KEGG" id="tcu:Tcur_3479"/>
<dbReference type="eggNOG" id="COG0183">
    <property type="taxonomic scope" value="Bacteria"/>
</dbReference>
<dbReference type="HOGENOM" id="CLU_035425_2_0_11"/>
<dbReference type="OrthoDB" id="3208853at2"/>
<dbReference type="Proteomes" id="UP000001918">
    <property type="component" value="Chromosome"/>
</dbReference>
<dbReference type="GO" id="GO:0016747">
    <property type="term" value="F:acyltransferase activity, transferring groups other than amino-acyl groups"/>
    <property type="evidence" value="ECO:0007669"/>
    <property type="project" value="InterPro"/>
</dbReference>
<dbReference type="GO" id="GO:0016829">
    <property type="term" value="F:lyase activity"/>
    <property type="evidence" value="ECO:0007669"/>
    <property type="project" value="UniProtKB-KW"/>
</dbReference>
<dbReference type="GO" id="GO:0030573">
    <property type="term" value="P:bile acid catabolic process"/>
    <property type="evidence" value="ECO:0007669"/>
    <property type="project" value="UniProtKB-KW"/>
</dbReference>
<dbReference type="GO" id="GO:0016042">
    <property type="term" value="P:lipid catabolic process"/>
    <property type="evidence" value="ECO:0007669"/>
    <property type="project" value="UniProtKB-KW"/>
</dbReference>
<dbReference type="CDD" id="cd00829">
    <property type="entry name" value="SCP-x_thiolase"/>
    <property type="match status" value="1"/>
</dbReference>
<dbReference type="Gene3D" id="3.40.47.10">
    <property type="match status" value="1"/>
</dbReference>
<dbReference type="InterPro" id="IPR002155">
    <property type="entry name" value="Thiolase"/>
</dbReference>
<dbReference type="InterPro" id="IPR016039">
    <property type="entry name" value="Thiolase-like"/>
</dbReference>
<dbReference type="InterPro" id="IPR055140">
    <property type="entry name" value="Thiolase_C_2"/>
</dbReference>
<dbReference type="InterPro" id="IPR020616">
    <property type="entry name" value="Thiolase_N"/>
</dbReference>
<dbReference type="NCBIfam" id="NF005892">
    <property type="entry name" value="PRK07855.1"/>
    <property type="match status" value="1"/>
</dbReference>
<dbReference type="PANTHER" id="PTHR42870">
    <property type="entry name" value="ACETYL-COA C-ACETYLTRANSFERASE"/>
    <property type="match status" value="1"/>
</dbReference>
<dbReference type="PANTHER" id="PTHR42870:SF1">
    <property type="entry name" value="NON-SPECIFIC LIPID-TRANSFER PROTEIN-LIKE 2"/>
    <property type="match status" value="1"/>
</dbReference>
<dbReference type="Pfam" id="PF22691">
    <property type="entry name" value="Thiolase_C_1"/>
    <property type="match status" value="1"/>
</dbReference>
<dbReference type="Pfam" id="PF00108">
    <property type="entry name" value="Thiolase_N"/>
    <property type="match status" value="1"/>
</dbReference>
<dbReference type="PIRSF" id="PIRSF000429">
    <property type="entry name" value="Ac-CoA_Ac_transf"/>
    <property type="match status" value="1"/>
</dbReference>
<dbReference type="SUPFAM" id="SSF53901">
    <property type="entry name" value="Thiolase-like"/>
    <property type="match status" value="2"/>
</dbReference>
<evidence type="ECO:0000269" key="1">
    <source>
    </source>
</evidence>
<evidence type="ECO:0000303" key="2">
    <source>
    </source>
</evidence>
<evidence type="ECO:0000305" key="3"/>
<evidence type="ECO:0000305" key="4">
    <source>
    </source>
</evidence>
<evidence type="ECO:0000312" key="5">
    <source>
        <dbReference type="EMBL" id="ACY99017.1"/>
    </source>
</evidence>
<evidence type="ECO:0007744" key="6">
    <source>
        <dbReference type="PDB" id="6OK1"/>
    </source>
</evidence>
<evidence type="ECO:0007829" key="7">
    <source>
        <dbReference type="PDB" id="6OK1"/>
    </source>
</evidence>
<feature type="chain" id="PRO_0000452244" description="Steroid side-chain-cleaving aldolase">
    <location>
        <begin position="1"/>
        <end position="391"/>
    </location>
</feature>
<feature type="active site" description="Proton acceptor" evidence="4">
    <location>
        <position position="294"/>
    </location>
</feature>
<feature type="active site" description="Proton donor" evidence="4">
    <location>
        <position position="344"/>
    </location>
</feature>
<feature type="mutagenesis site" description="Almost loss of activity." evidence="1">
    <original>G</original>
    <variation>P</variation>
    <location>
        <position position="82"/>
    </location>
</feature>
<feature type="mutagenesis site" description="Almost loss of activity. Loss of activity; when associated with F-344." evidence="1">
    <original>Y</original>
    <variation>F</variation>
    <location>
        <position position="294"/>
    </location>
</feature>
<feature type="mutagenesis site" description="13-fold decrease in catalytic efficiency." evidence="1">
    <original>H</original>
    <variation>A</variation>
    <location>
        <position position="296"/>
    </location>
</feature>
<feature type="mutagenesis site" description="322-fold decrease in catalytic efficiency. Loss of activity; when associated with F-294." evidence="1">
    <original>Y</original>
    <variation>F</variation>
    <location>
        <position position="344"/>
    </location>
</feature>
<feature type="mutagenesis site" description="11-fold decrease in catalytic efficiency." evidence="1">
    <original>H</original>
    <variation>A</variation>
    <location>
        <position position="346"/>
    </location>
</feature>
<feature type="turn" evidence="7">
    <location>
        <begin position="5"/>
        <end position="7"/>
    </location>
</feature>
<feature type="strand" evidence="7">
    <location>
        <begin position="8"/>
        <end position="15"/>
    </location>
</feature>
<feature type="helix" evidence="7">
    <location>
        <begin position="26"/>
        <end position="40"/>
    </location>
</feature>
<feature type="helix" evidence="7">
    <location>
        <begin position="45"/>
        <end position="47"/>
    </location>
</feature>
<feature type="strand" evidence="7">
    <location>
        <begin position="50"/>
        <end position="54"/>
    </location>
</feature>
<feature type="helix" evidence="7">
    <location>
        <begin position="61"/>
        <end position="68"/>
    </location>
</feature>
<feature type="strand" evidence="7">
    <location>
        <begin position="73"/>
        <end position="79"/>
    </location>
</feature>
<feature type="helix" evidence="7">
    <location>
        <begin position="82"/>
        <end position="85"/>
    </location>
</feature>
<feature type="helix" evidence="7">
    <location>
        <begin position="86"/>
        <end position="98"/>
    </location>
</feature>
<feature type="strand" evidence="7">
    <location>
        <begin position="103"/>
        <end position="112"/>
    </location>
</feature>
<feature type="turn" evidence="7">
    <location>
        <begin position="113"/>
        <end position="115"/>
    </location>
</feature>
<feature type="helix" evidence="7">
    <location>
        <begin position="132"/>
        <end position="135"/>
    </location>
</feature>
<feature type="helix" evidence="7">
    <location>
        <begin position="136"/>
        <end position="139"/>
    </location>
</feature>
<feature type="helix" evidence="7">
    <location>
        <begin position="141"/>
        <end position="143"/>
    </location>
</feature>
<feature type="helix" evidence="7">
    <location>
        <begin position="148"/>
        <end position="163"/>
    </location>
</feature>
<feature type="helix" evidence="7">
    <location>
        <begin position="167"/>
        <end position="182"/>
    </location>
</feature>
<feature type="turn" evidence="7">
    <location>
        <begin position="188"/>
        <end position="191"/>
    </location>
</feature>
<feature type="helix" evidence="7">
    <location>
        <begin position="196"/>
        <end position="201"/>
    </location>
</feature>
<feature type="strand" evidence="7">
    <location>
        <begin position="204"/>
        <end position="207"/>
    </location>
</feature>
<feature type="helix" evidence="7">
    <location>
        <begin position="211"/>
        <end position="213"/>
    </location>
</feature>
<feature type="strand" evidence="7">
    <location>
        <begin position="219"/>
        <end position="228"/>
    </location>
</feature>
<feature type="helix" evidence="7">
    <location>
        <begin position="229"/>
        <end position="232"/>
    </location>
</feature>
<feature type="strand" evidence="7">
    <location>
        <begin position="235"/>
        <end position="237"/>
    </location>
</feature>
<feature type="strand" evidence="7">
    <location>
        <begin position="240"/>
        <end position="249"/>
    </location>
</feature>
<feature type="helix" evidence="7">
    <location>
        <begin position="268"/>
        <end position="281"/>
    </location>
</feature>
<feature type="helix" evidence="7">
    <location>
        <begin position="285"/>
        <end position="287"/>
    </location>
</feature>
<feature type="strand" evidence="7">
    <location>
        <begin position="290"/>
        <end position="292"/>
    </location>
</feature>
<feature type="strand" evidence="7">
    <location>
        <begin position="296"/>
        <end position="298"/>
    </location>
</feature>
<feature type="helix" evidence="7">
    <location>
        <begin position="301"/>
        <end position="307"/>
    </location>
</feature>
<feature type="helix" evidence="7">
    <location>
        <begin position="316"/>
        <end position="321"/>
    </location>
</feature>
<feature type="turn" evidence="7">
    <location>
        <begin position="322"/>
        <end position="325"/>
    </location>
</feature>
<feature type="strand" evidence="7">
    <location>
        <begin position="329"/>
        <end position="331"/>
    </location>
</feature>
<feature type="helix" evidence="7">
    <location>
        <begin position="338"/>
        <end position="341"/>
    </location>
</feature>
<feature type="helix" evidence="7">
    <location>
        <begin position="348"/>
        <end position="359"/>
    </location>
</feature>
<feature type="strand" evidence="7">
    <location>
        <begin position="370"/>
        <end position="375"/>
    </location>
</feature>
<feature type="strand" evidence="7">
    <location>
        <begin position="378"/>
        <end position="388"/>
    </location>
</feature>
<sequence>MSVLPGAAAIAGIGATEFSKNSGRSELQLACEAVLAAIADAGLEPSDVDGLVTFTADTSSEIHVARNTGIGELKFFSRVGYGGGAACGTVQQAAMAVATGIAEVVVCYRAFNERSGVRYGLGQAGRQMDQGADSAAYAWLLPFGLNTPAQWVAMFARRYMHEYGATSEDFGRVAVVDRKHAATNPKAWFYQRPITLEDHQNSRWIVEPLHLLDCCQESDGGQALVVVSTERARDLPHPPALIWGAAQGSGYDQHMMTSYYRSEITGIPEMGLVGQQLYAQSGLNPSDIGAAILYDHFTPLVLPQLEELGFCARGEAKDFIADGNLEIGGRLPCNTHGGQLGEAYIHGMNGIAEAVRLVRGTSVNQPGDVTNVLVTAGTGVPTSGLILGADR</sequence>
<accession>D1AB74</accession>
<gene>
    <name evidence="2" type="primary">ltp2</name>
    <name evidence="5" type="ordered locus">Tcur_3479</name>
</gene>
<proteinExistence type="evidence at protein level"/>
<reference key="1">
    <citation type="journal article" date="2011" name="Stand. Genomic Sci.">
        <title>Complete genome sequence of Thermomonospora curvata type strain (B9).</title>
        <authorList>
            <person name="Chertkov O."/>
            <person name="Sikorski J."/>
            <person name="Nolan M."/>
            <person name="Lapidus A."/>
            <person name="Lucas S."/>
            <person name="Del Rio T.G."/>
            <person name="Tice H."/>
            <person name="Cheng J.F."/>
            <person name="Goodwin L."/>
            <person name="Pitluck S."/>
            <person name="Liolios K."/>
            <person name="Ivanova N."/>
            <person name="Mavromatis K."/>
            <person name="Mikhailova N."/>
            <person name="Ovchinnikova G."/>
            <person name="Pati A."/>
            <person name="Chen A."/>
            <person name="Palaniappan K."/>
            <person name="Djao O.D."/>
            <person name="Land M."/>
            <person name="Hauser L."/>
            <person name="Chang Y.J."/>
            <person name="Jeffries C.D."/>
            <person name="Brettin T."/>
            <person name="Han C."/>
            <person name="Detter J.C."/>
            <person name="Rohde M."/>
            <person name="Goeker M."/>
            <person name="Woyke T."/>
            <person name="Bristow J."/>
            <person name="Eisen J.A."/>
            <person name="Markowitz V."/>
            <person name="Hugenholtz P."/>
            <person name="Klenk H.P."/>
            <person name="Kyrpides N.C."/>
        </authorList>
    </citation>
    <scope>NUCLEOTIDE SEQUENCE [LARGE SCALE GENOMIC DNA]</scope>
    <source>
        <strain>ATCC 19995 / DSM 43183 / JCM 3096 / KCTC 9072 / NBRC 15933 / NCIMB 10081 / Henssen B9</strain>
    </source>
</reference>
<reference evidence="6" key="2">
    <citation type="journal article" date="2019" name="J. Biol. Chem.">
        <title>The steroid side-chain-cleaving aldolase Ltp2-ChsH2DUF35 is a thiolase superfamily member with a radically repurposed active site.</title>
        <authorList>
            <person name="Aggett R."/>
            <person name="Mallette E."/>
            <person name="Gilbert S.E."/>
            <person name="Vachon M.A."/>
            <person name="Schroeter K.L."/>
            <person name="Kimber M.S."/>
            <person name="Seah S.Y.K."/>
        </authorList>
    </citation>
    <scope>X-RAY CRYSTALLOGRAPHY (1.70 ANGSTROMS) IN COMPLEX WITH CHSH2-DUF35</scope>
    <scope>FUNCTION</scope>
    <scope>CATALYTIC ACTIVITY</scope>
    <scope>BIOPHYSICOCHEMICAL PROPERTIES</scope>
    <scope>SUBUNIT</scope>
    <scope>INTERACTION WITH CHSH2</scope>
    <scope>ACTIVE SITE</scope>
    <scope>MUTAGENESIS OF GLY-82; TYR-294; HIS-296; TYR-344 AND HIS-346</scope>
    <source>
        <strain>ATCC 19995 / DSM 43183 / JCM 3096 / KCTC 9072 / NBRC 15933 / NCIMB 10081 / Henssen B9</strain>
    </source>
</reference>
<keyword id="KW-0002">3D-structure</keyword>
<keyword id="KW-0088">Bile acid catabolism</keyword>
<keyword id="KW-0442">Lipid degradation</keyword>
<keyword id="KW-0443">Lipid metabolism</keyword>
<keyword id="KW-0456">Lyase</keyword>
<keyword id="KW-1185">Reference proteome</keyword>
<keyword id="KW-0753">Steroid metabolism</keyword>
<organism>
    <name type="scientific">Thermomonospora curvata (strain ATCC 19995 / DSM 43183 / JCM 3096 / KCTC 9072 / NBRC 15933 / NCIMB 10081 / Henssen B9)</name>
    <dbReference type="NCBI Taxonomy" id="471852"/>
    <lineage>
        <taxon>Bacteria</taxon>
        <taxon>Bacillati</taxon>
        <taxon>Actinomycetota</taxon>
        <taxon>Actinomycetes</taxon>
        <taxon>Streptosporangiales</taxon>
        <taxon>Thermomonosporaceae</taxon>
        <taxon>Thermomonospora</taxon>
    </lineage>
</organism>
<protein>
    <recommendedName>
        <fullName evidence="3">Steroid side-chain-cleaving aldolase</fullName>
        <ecNumber evidence="1">4.1.3.-</ecNumber>
    </recommendedName>
    <alternativeName>
        <fullName evidence="3">3-oxo-23,24-bisnorchol-4-en-17-ol-22-oyl-CoA lyase</fullName>
    </alternativeName>
</protein>